<comment type="function">
    <text evidence="1">Part of the ABC transporter complex NodIJ involved in the export of the nodulation factors (Nod factors), the bacterial signal molecules that induce symbiosis and subsequent nodulation induction. Nod factors are LCO (lipo-chitin oligosaccharide), a modified beta-1,4-linked N-acetylglucosamine oligosaccharide. This subunit is responsible for energy coupling to the transport system.</text>
</comment>
<comment type="subunit">
    <text evidence="1">The complex is composed of two ATP-binding proteins (NodI) and two transmembrane proteins (NodJ).</text>
</comment>
<comment type="subcellular location">
    <subcellularLocation>
        <location evidence="1">Cell inner membrane</location>
        <topology evidence="1">Peripheral membrane protein</topology>
    </subcellularLocation>
</comment>
<comment type="similarity">
    <text evidence="1">Belongs to the ABC transporter superfamily. Lipooligosaccharide exporter (TC 3.A.1.102) family.</text>
</comment>
<dbReference type="EC" id="7.6.2.-" evidence="1"/>
<dbReference type="EMBL" id="X51411">
    <property type="protein sequence ID" value="CAA35771.1"/>
    <property type="molecule type" value="Genomic_DNA"/>
</dbReference>
<dbReference type="PIR" id="S08616">
    <property type="entry name" value="S08616"/>
</dbReference>
<dbReference type="SMR" id="P24143"/>
<dbReference type="GO" id="GO:0005886">
    <property type="term" value="C:plasma membrane"/>
    <property type="evidence" value="ECO:0007669"/>
    <property type="project" value="UniProtKB-SubCell"/>
</dbReference>
<dbReference type="GO" id="GO:0005524">
    <property type="term" value="F:ATP binding"/>
    <property type="evidence" value="ECO:0007669"/>
    <property type="project" value="UniProtKB-KW"/>
</dbReference>
<sequence>IYGGDPQELSLLIKPYARRIEISGETLFCYTPDPEQVRAQLRGHRGLRLLERPPNLEDVFLRLTGREMGKYQ</sequence>
<reference key="1">
    <citation type="journal article" date="1990" name="Mol. Microbiol.">
        <title>Molecular characterization of the nodulation gene, nodT, from two biovars of Rhizobium leguminosarum.</title>
        <authorList>
            <person name="Surin B.P."/>
            <person name="Watson J.M."/>
            <person name="Hamilton W.D.O."/>
            <person name="Economou A."/>
            <person name="Downie J.A."/>
        </authorList>
    </citation>
    <scope>NUCLEOTIDE SEQUENCE [GENOMIC DNA]</scope>
    <source>
        <strain>ANU 843</strain>
    </source>
</reference>
<geneLocation type="plasmid">
    <name>sym pRtr843e</name>
</geneLocation>
<organism>
    <name type="scientific">Rhizobium leguminosarum bv. trifolii</name>
    <dbReference type="NCBI Taxonomy" id="386"/>
    <lineage>
        <taxon>Bacteria</taxon>
        <taxon>Pseudomonadati</taxon>
        <taxon>Pseudomonadota</taxon>
        <taxon>Alphaproteobacteria</taxon>
        <taxon>Hyphomicrobiales</taxon>
        <taxon>Rhizobiaceae</taxon>
        <taxon>Rhizobium/Agrobacterium group</taxon>
        <taxon>Rhizobium</taxon>
    </lineage>
</organism>
<evidence type="ECO:0000255" key="1">
    <source>
        <dbReference type="HAMAP-Rule" id="MF_01704"/>
    </source>
</evidence>
<accession>P24143</accession>
<protein>
    <recommendedName>
        <fullName evidence="1">Nod factor export ATP-binding protein I</fullName>
        <ecNumber evidence="1">7.6.2.-</ecNumber>
    </recommendedName>
    <alternativeName>
        <fullName evidence="1">Nodulation ATP-binding protein I</fullName>
    </alternativeName>
</protein>
<proteinExistence type="inferred from homology"/>
<name>NODI_RHILT</name>
<gene>
    <name evidence="1" type="primary">nodI</name>
</gene>
<feature type="chain" id="PRO_0000092639" description="Nod factor export ATP-binding protein I">
    <location>
        <begin position="1" status="less than"/>
        <end position="72"/>
    </location>
</feature>
<feature type="non-terminal residue">
    <location>
        <position position="1"/>
    </location>
</feature>
<keyword id="KW-0067">ATP-binding</keyword>
<keyword id="KW-0997">Cell inner membrane</keyword>
<keyword id="KW-1003">Cell membrane</keyword>
<keyword id="KW-0472">Membrane</keyword>
<keyword id="KW-0536">Nodulation</keyword>
<keyword id="KW-0547">Nucleotide-binding</keyword>
<keyword id="KW-0614">Plasmid</keyword>
<keyword id="KW-1278">Translocase</keyword>
<keyword id="KW-0813">Transport</keyword>